<organism>
    <name type="scientific">Caldicellulosiruptor saccharolyticus (strain ATCC 43494 / DSM 8903 / Tp8T 6331)</name>
    <dbReference type="NCBI Taxonomy" id="351627"/>
    <lineage>
        <taxon>Bacteria</taxon>
        <taxon>Bacillati</taxon>
        <taxon>Bacillota</taxon>
        <taxon>Bacillota incertae sedis</taxon>
        <taxon>Caldicellulosiruptorales</taxon>
        <taxon>Caldicellulosiruptoraceae</taxon>
        <taxon>Caldicellulosiruptor</taxon>
    </lineage>
</organism>
<name>RISB_CALS8</name>
<keyword id="KW-0686">Riboflavin biosynthesis</keyword>
<keyword id="KW-0808">Transferase</keyword>
<sequence>MRTFEGSFCGKDLKLAIVVSRFNSFITDELLKGCLDGLSRHDVDSENIDVYYVPGAFEIPLVAKKLAKSKKYNAIIALGAVIRGSTPHFEYVSAEVSKGIANVSLEQEVPVIFGVLTCDTVDQAIERAGTKAGNKGFDAALSALEMANLMKNISES</sequence>
<comment type="function">
    <text evidence="1">Catalyzes the formation of 6,7-dimethyl-8-ribityllumazine by condensation of 5-amino-6-(D-ribitylamino)uracil with 3,4-dihydroxy-2-butanone 4-phosphate. This is the penultimate step in the biosynthesis of riboflavin.</text>
</comment>
<comment type="catalytic activity">
    <reaction evidence="1">
        <text>(2S)-2-hydroxy-3-oxobutyl phosphate + 5-amino-6-(D-ribitylamino)uracil = 6,7-dimethyl-8-(1-D-ribityl)lumazine + phosphate + 2 H2O + H(+)</text>
        <dbReference type="Rhea" id="RHEA:26152"/>
        <dbReference type="ChEBI" id="CHEBI:15377"/>
        <dbReference type="ChEBI" id="CHEBI:15378"/>
        <dbReference type="ChEBI" id="CHEBI:15934"/>
        <dbReference type="ChEBI" id="CHEBI:43474"/>
        <dbReference type="ChEBI" id="CHEBI:58201"/>
        <dbReference type="ChEBI" id="CHEBI:58830"/>
        <dbReference type="EC" id="2.5.1.78"/>
    </reaction>
</comment>
<comment type="pathway">
    <text evidence="1">Cofactor biosynthesis; riboflavin biosynthesis; riboflavin from 2-hydroxy-3-oxobutyl phosphate and 5-amino-6-(D-ribitylamino)uracil: step 1/2.</text>
</comment>
<comment type="similarity">
    <text evidence="1">Belongs to the DMRL synthase family.</text>
</comment>
<dbReference type="EC" id="2.5.1.78" evidence="1"/>
<dbReference type="EMBL" id="CP000679">
    <property type="protein sequence ID" value="ABP66410.1"/>
    <property type="molecule type" value="Genomic_DNA"/>
</dbReference>
<dbReference type="SMR" id="A4XHM5"/>
<dbReference type="STRING" id="351627.Csac_0791"/>
<dbReference type="KEGG" id="csc:Csac_0791"/>
<dbReference type="eggNOG" id="COG0054">
    <property type="taxonomic scope" value="Bacteria"/>
</dbReference>
<dbReference type="HOGENOM" id="CLU_089358_1_1_9"/>
<dbReference type="OrthoDB" id="9809709at2"/>
<dbReference type="UniPathway" id="UPA00275">
    <property type="reaction ID" value="UER00404"/>
</dbReference>
<dbReference type="Proteomes" id="UP000000256">
    <property type="component" value="Chromosome"/>
</dbReference>
<dbReference type="GO" id="GO:0005829">
    <property type="term" value="C:cytosol"/>
    <property type="evidence" value="ECO:0007669"/>
    <property type="project" value="TreeGrafter"/>
</dbReference>
<dbReference type="GO" id="GO:0009349">
    <property type="term" value="C:riboflavin synthase complex"/>
    <property type="evidence" value="ECO:0007669"/>
    <property type="project" value="InterPro"/>
</dbReference>
<dbReference type="GO" id="GO:0000906">
    <property type="term" value="F:6,7-dimethyl-8-ribityllumazine synthase activity"/>
    <property type="evidence" value="ECO:0007669"/>
    <property type="project" value="UniProtKB-UniRule"/>
</dbReference>
<dbReference type="GO" id="GO:0009231">
    <property type="term" value="P:riboflavin biosynthetic process"/>
    <property type="evidence" value="ECO:0007669"/>
    <property type="project" value="UniProtKB-UniRule"/>
</dbReference>
<dbReference type="CDD" id="cd09209">
    <property type="entry name" value="Lumazine_synthase-I"/>
    <property type="match status" value="1"/>
</dbReference>
<dbReference type="FunFam" id="3.40.50.960:FF:000001">
    <property type="entry name" value="6,7-dimethyl-8-ribityllumazine synthase"/>
    <property type="match status" value="1"/>
</dbReference>
<dbReference type="Gene3D" id="3.40.50.960">
    <property type="entry name" value="Lumazine/riboflavin synthase"/>
    <property type="match status" value="1"/>
</dbReference>
<dbReference type="HAMAP" id="MF_00178">
    <property type="entry name" value="Lumazine_synth"/>
    <property type="match status" value="1"/>
</dbReference>
<dbReference type="InterPro" id="IPR034964">
    <property type="entry name" value="LS"/>
</dbReference>
<dbReference type="InterPro" id="IPR002180">
    <property type="entry name" value="LS/RS"/>
</dbReference>
<dbReference type="InterPro" id="IPR036467">
    <property type="entry name" value="LS/RS_sf"/>
</dbReference>
<dbReference type="NCBIfam" id="TIGR00114">
    <property type="entry name" value="lumazine-synth"/>
    <property type="match status" value="1"/>
</dbReference>
<dbReference type="NCBIfam" id="NF000812">
    <property type="entry name" value="PRK00061.1-4"/>
    <property type="match status" value="1"/>
</dbReference>
<dbReference type="PANTHER" id="PTHR21058:SF0">
    <property type="entry name" value="6,7-DIMETHYL-8-RIBITYLLUMAZINE SYNTHASE"/>
    <property type="match status" value="1"/>
</dbReference>
<dbReference type="PANTHER" id="PTHR21058">
    <property type="entry name" value="6,7-DIMETHYL-8-RIBITYLLUMAZINE SYNTHASE DMRL SYNTHASE LUMAZINE SYNTHASE"/>
    <property type="match status" value="1"/>
</dbReference>
<dbReference type="Pfam" id="PF00885">
    <property type="entry name" value="DMRL_synthase"/>
    <property type="match status" value="1"/>
</dbReference>
<dbReference type="SUPFAM" id="SSF52121">
    <property type="entry name" value="Lumazine synthase"/>
    <property type="match status" value="1"/>
</dbReference>
<gene>
    <name evidence="1" type="primary">ribH</name>
    <name type="ordered locus">Csac_0791</name>
</gene>
<proteinExistence type="inferred from homology"/>
<feature type="chain" id="PRO_1000040388" description="6,7-dimethyl-8-ribityllumazine synthase">
    <location>
        <begin position="1"/>
        <end position="156"/>
    </location>
</feature>
<feature type="active site" description="Proton donor" evidence="1">
    <location>
        <position position="88"/>
    </location>
</feature>
<feature type="binding site" evidence="1">
    <location>
        <position position="22"/>
    </location>
    <ligand>
        <name>5-amino-6-(D-ribitylamino)uracil</name>
        <dbReference type="ChEBI" id="CHEBI:15934"/>
    </ligand>
</feature>
<feature type="binding site" evidence="1">
    <location>
        <begin position="56"/>
        <end position="58"/>
    </location>
    <ligand>
        <name>5-amino-6-(D-ribitylamino)uracil</name>
        <dbReference type="ChEBI" id="CHEBI:15934"/>
    </ligand>
</feature>
<feature type="binding site" evidence="1">
    <location>
        <begin position="80"/>
        <end position="82"/>
    </location>
    <ligand>
        <name>5-amino-6-(D-ribitylamino)uracil</name>
        <dbReference type="ChEBI" id="CHEBI:15934"/>
    </ligand>
</feature>
<feature type="binding site" evidence="1">
    <location>
        <begin position="85"/>
        <end position="86"/>
    </location>
    <ligand>
        <name>(2S)-2-hydroxy-3-oxobutyl phosphate</name>
        <dbReference type="ChEBI" id="CHEBI:58830"/>
    </ligand>
</feature>
<feature type="binding site" evidence="1">
    <location>
        <position position="113"/>
    </location>
    <ligand>
        <name>5-amino-6-(D-ribitylamino)uracil</name>
        <dbReference type="ChEBI" id="CHEBI:15934"/>
    </ligand>
</feature>
<feature type="binding site" evidence="1">
    <location>
        <position position="127"/>
    </location>
    <ligand>
        <name>(2S)-2-hydroxy-3-oxobutyl phosphate</name>
        <dbReference type="ChEBI" id="CHEBI:58830"/>
    </ligand>
</feature>
<accession>A4XHM5</accession>
<protein>
    <recommendedName>
        <fullName evidence="1">6,7-dimethyl-8-ribityllumazine synthase</fullName>
        <shortName evidence="1">DMRL synthase</shortName>
        <shortName evidence="1">LS</shortName>
        <shortName evidence="1">Lumazine synthase</shortName>
        <ecNumber evidence="1">2.5.1.78</ecNumber>
    </recommendedName>
</protein>
<reference key="1">
    <citation type="submission" date="2007-04" db="EMBL/GenBank/DDBJ databases">
        <title>Genome sequence of the thermophilic hydrogen-producing bacterium Caldicellulosiruptor saccharolyticus DSM 8903.</title>
        <authorList>
            <person name="Copeland A."/>
            <person name="Lucas S."/>
            <person name="Lapidus A."/>
            <person name="Barry K."/>
            <person name="Detter J.C."/>
            <person name="Glavina del Rio T."/>
            <person name="Hammon N."/>
            <person name="Israni S."/>
            <person name="Dalin E."/>
            <person name="Tice H."/>
            <person name="Pitluck S."/>
            <person name="Kiss H."/>
            <person name="Brettin T."/>
            <person name="Bruce D."/>
            <person name="Han C."/>
            <person name="Schmutz J."/>
            <person name="Larimer F."/>
            <person name="Land M."/>
            <person name="Hauser L."/>
            <person name="Kyrpides N."/>
            <person name="Lykidis A."/>
            <person name="van de Werken H.J.G."/>
            <person name="Verhaart M.R.A."/>
            <person name="VanFossen A.L."/>
            <person name="Lewis D.L."/>
            <person name="Nichols J.D."/>
            <person name="Goorissen H.P."/>
            <person name="van Niel E.W.J."/>
            <person name="Stams F.J.M."/>
            <person name="Willquist K.U."/>
            <person name="Ward D.E."/>
            <person name="van der Oost J."/>
            <person name="Kelly R.M."/>
            <person name="Kengen S.M.W."/>
            <person name="Richardson P."/>
        </authorList>
    </citation>
    <scope>NUCLEOTIDE SEQUENCE [LARGE SCALE GENOMIC DNA]</scope>
    <source>
        <strain>ATCC 43494 / DSM 8903 / Tp8T 6331</strain>
    </source>
</reference>
<evidence type="ECO:0000255" key="1">
    <source>
        <dbReference type="HAMAP-Rule" id="MF_00178"/>
    </source>
</evidence>